<evidence type="ECO:0000255" key="1">
    <source>
        <dbReference type="HAMAP-Rule" id="MF_01855"/>
    </source>
</evidence>
<dbReference type="EC" id="3.1.3.11" evidence="1"/>
<dbReference type="EMBL" id="AE004437">
    <property type="protein sequence ID" value="AAG19177.1"/>
    <property type="molecule type" value="Genomic_DNA"/>
</dbReference>
<dbReference type="PIR" id="E84226">
    <property type="entry name" value="E84226"/>
</dbReference>
<dbReference type="RefSeq" id="WP_010902473.1">
    <property type="nucleotide sequence ID" value="NC_002607.1"/>
</dbReference>
<dbReference type="SMR" id="Q9HRI1"/>
<dbReference type="STRING" id="64091.VNG_0684G"/>
<dbReference type="PaxDb" id="64091-VNG_0684G"/>
<dbReference type="KEGG" id="hal:VNG_0684G"/>
<dbReference type="PATRIC" id="fig|64091.14.peg.525"/>
<dbReference type="HOGENOM" id="CLU_039977_3_0_2"/>
<dbReference type="InParanoid" id="Q9HRI1"/>
<dbReference type="OrthoDB" id="146513at2157"/>
<dbReference type="PhylomeDB" id="Q9HRI1"/>
<dbReference type="UniPathway" id="UPA00138"/>
<dbReference type="Proteomes" id="UP000000554">
    <property type="component" value="Chromosome"/>
</dbReference>
<dbReference type="GO" id="GO:0005737">
    <property type="term" value="C:cytoplasm"/>
    <property type="evidence" value="ECO:0000318"/>
    <property type="project" value="GO_Central"/>
</dbReference>
<dbReference type="GO" id="GO:0042132">
    <property type="term" value="F:fructose 1,6-bisphosphate 1-phosphatase activity"/>
    <property type="evidence" value="ECO:0000318"/>
    <property type="project" value="GO_Central"/>
</dbReference>
<dbReference type="GO" id="GO:0000287">
    <property type="term" value="F:magnesium ion binding"/>
    <property type="evidence" value="ECO:0007669"/>
    <property type="project" value="UniProtKB-UniRule"/>
</dbReference>
<dbReference type="GO" id="GO:0030388">
    <property type="term" value="P:fructose 1,6-bisphosphate metabolic process"/>
    <property type="evidence" value="ECO:0000318"/>
    <property type="project" value="GO_Central"/>
</dbReference>
<dbReference type="GO" id="GO:0006002">
    <property type="term" value="P:fructose 6-phosphate metabolic process"/>
    <property type="evidence" value="ECO:0000318"/>
    <property type="project" value="GO_Central"/>
</dbReference>
<dbReference type="GO" id="GO:0006000">
    <property type="term" value="P:fructose metabolic process"/>
    <property type="evidence" value="ECO:0000318"/>
    <property type="project" value="GO_Central"/>
</dbReference>
<dbReference type="GO" id="GO:0006094">
    <property type="term" value="P:gluconeogenesis"/>
    <property type="evidence" value="ECO:0000318"/>
    <property type="project" value="GO_Central"/>
</dbReference>
<dbReference type="Gene3D" id="3.40.190.80">
    <property type="match status" value="1"/>
</dbReference>
<dbReference type="Gene3D" id="3.30.540.10">
    <property type="entry name" value="Fructose-1,6-Bisphosphatase, subunit A, domain 1"/>
    <property type="match status" value="1"/>
</dbReference>
<dbReference type="HAMAP" id="MF_01855">
    <property type="entry name" value="FBPase_class1"/>
    <property type="match status" value="1"/>
</dbReference>
<dbReference type="InterPro" id="IPR044015">
    <property type="entry name" value="FBPase_C_dom"/>
</dbReference>
<dbReference type="InterPro" id="IPR000146">
    <property type="entry name" value="FBPase_class-1"/>
</dbReference>
<dbReference type="InterPro" id="IPR033391">
    <property type="entry name" value="FBPase_N"/>
</dbReference>
<dbReference type="InterPro" id="IPR028343">
    <property type="entry name" value="FBPtase"/>
</dbReference>
<dbReference type="InterPro" id="IPR023079">
    <property type="entry name" value="SBPase"/>
</dbReference>
<dbReference type="PANTHER" id="PTHR11556">
    <property type="entry name" value="FRUCTOSE-1,6-BISPHOSPHATASE-RELATED"/>
    <property type="match status" value="1"/>
</dbReference>
<dbReference type="PANTHER" id="PTHR11556:SF35">
    <property type="entry name" value="SEDOHEPTULOSE-1,7-BISPHOSPHATASE, CHLOROPLASTIC"/>
    <property type="match status" value="1"/>
</dbReference>
<dbReference type="Pfam" id="PF00316">
    <property type="entry name" value="FBPase"/>
    <property type="match status" value="1"/>
</dbReference>
<dbReference type="Pfam" id="PF18913">
    <property type="entry name" value="FBPase_C"/>
    <property type="match status" value="1"/>
</dbReference>
<dbReference type="PIRSF" id="PIRSF500210">
    <property type="entry name" value="FBPtase"/>
    <property type="match status" value="1"/>
</dbReference>
<dbReference type="PIRSF" id="PIRSF000904">
    <property type="entry name" value="FBPtase_SBPase"/>
    <property type="match status" value="1"/>
</dbReference>
<dbReference type="PRINTS" id="PR01958">
    <property type="entry name" value="S17BPHPHTASE"/>
</dbReference>
<dbReference type="SUPFAM" id="SSF56655">
    <property type="entry name" value="Carbohydrate phosphatase"/>
    <property type="match status" value="1"/>
</dbReference>
<reference key="1">
    <citation type="journal article" date="2000" name="Proc. Natl. Acad. Sci. U.S.A.">
        <title>Genome sequence of Halobacterium species NRC-1.</title>
        <authorList>
            <person name="Ng W.V."/>
            <person name="Kennedy S.P."/>
            <person name="Mahairas G.G."/>
            <person name="Berquist B."/>
            <person name="Pan M."/>
            <person name="Shukla H.D."/>
            <person name="Lasky S.R."/>
            <person name="Baliga N.S."/>
            <person name="Thorsson V."/>
            <person name="Sbrogna J."/>
            <person name="Swartzell S."/>
            <person name="Weir D."/>
            <person name="Hall J."/>
            <person name="Dahl T.A."/>
            <person name="Welti R."/>
            <person name="Goo Y.A."/>
            <person name="Leithauser B."/>
            <person name="Keller K."/>
            <person name="Cruz R."/>
            <person name="Danson M.J."/>
            <person name="Hough D.W."/>
            <person name="Maddocks D.G."/>
            <person name="Jablonski P.E."/>
            <person name="Krebs M.P."/>
            <person name="Angevine C.M."/>
            <person name="Dale H."/>
            <person name="Isenbarger T.A."/>
            <person name="Peck R.F."/>
            <person name="Pohlschroder M."/>
            <person name="Spudich J.L."/>
            <person name="Jung K.-H."/>
            <person name="Alam M."/>
            <person name="Freitas T."/>
            <person name="Hou S."/>
            <person name="Daniels C.J."/>
            <person name="Dennis P.P."/>
            <person name="Omer A.D."/>
            <person name="Ebhardt H."/>
            <person name="Lowe T.M."/>
            <person name="Liang P."/>
            <person name="Riley M."/>
            <person name="Hood L."/>
            <person name="DasSarma S."/>
        </authorList>
    </citation>
    <scope>NUCLEOTIDE SEQUENCE [LARGE SCALE GENOMIC DNA]</scope>
    <source>
        <strain>ATCC 700922 / JCM 11081 / NRC-1</strain>
    </source>
</reference>
<accession>Q9HRI1</accession>
<gene>
    <name evidence="1" type="primary">fbp</name>
    <name type="ordered locus">VNG_0684G</name>
</gene>
<sequence length="287" mass="30154">MADVIDAVFDAIADAAPEVRAGLPDHRATRDDQNASGDTQLEADVWADDLLFDRTESIEGVNWYASEERDAVVTVGDAEGGYAVALDPLDGSSNVKSNNPCGTVVGIYDQPLPAPGSSLVAAGFVLYGPTTTMVVARDDTVRESLVSETGATTDLGPVELPADPTVYGFGGRVPDWTPAFESFVRDVEDDLKLRYGGAMIADVNQVLVYGGVFGYPGMESAPDGKLRAQFEALPIAYIVETAGGASSDGTQSLLDVAPTRLHERTPTFVGTDDVIAALDAALPDHTN</sequence>
<comment type="catalytic activity">
    <reaction evidence="1">
        <text>beta-D-fructose 1,6-bisphosphate + H2O = beta-D-fructose 6-phosphate + phosphate</text>
        <dbReference type="Rhea" id="RHEA:11064"/>
        <dbReference type="ChEBI" id="CHEBI:15377"/>
        <dbReference type="ChEBI" id="CHEBI:32966"/>
        <dbReference type="ChEBI" id="CHEBI:43474"/>
        <dbReference type="ChEBI" id="CHEBI:57634"/>
        <dbReference type="EC" id="3.1.3.11"/>
    </reaction>
</comment>
<comment type="cofactor">
    <cofactor evidence="1">
        <name>Mg(2+)</name>
        <dbReference type="ChEBI" id="CHEBI:18420"/>
    </cofactor>
    <text evidence="1">Binds 2 magnesium ions per subunit.</text>
</comment>
<comment type="pathway">
    <text evidence="1">Carbohydrate biosynthesis; gluconeogenesis.</text>
</comment>
<comment type="subunit">
    <text evidence="1">Homotetramer.</text>
</comment>
<comment type="subcellular location">
    <subcellularLocation>
        <location evidence="1">Cytoplasm</location>
    </subcellularLocation>
</comment>
<comment type="similarity">
    <text evidence="1">Belongs to the FBPase class 1 family.</text>
</comment>
<organism>
    <name type="scientific">Halobacterium salinarum (strain ATCC 700922 / JCM 11081 / NRC-1)</name>
    <name type="common">Halobacterium halobium</name>
    <dbReference type="NCBI Taxonomy" id="64091"/>
    <lineage>
        <taxon>Archaea</taxon>
        <taxon>Methanobacteriati</taxon>
        <taxon>Methanobacteriota</taxon>
        <taxon>Stenosarchaea group</taxon>
        <taxon>Halobacteria</taxon>
        <taxon>Halobacteriales</taxon>
        <taxon>Halobacteriaceae</taxon>
        <taxon>Halobacterium</taxon>
        <taxon>Halobacterium salinarum NRC-34001</taxon>
    </lineage>
</organism>
<proteinExistence type="inferred from homology"/>
<name>F16PA_HALSA</name>
<feature type="chain" id="PRO_0000364770" description="Fructose-1,6-bisphosphatase class 1">
    <location>
        <begin position="1"/>
        <end position="287"/>
    </location>
</feature>
<feature type="binding site" evidence="1">
    <location>
        <position position="67"/>
    </location>
    <ligand>
        <name>Mg(2+)</name>
        <dbReference type="ChEBI" id="CHEBI:18420"/>
        <label>1</label>
    </ligand>
</feature>
<feature type="binding site" evidence="1">
    <location>
        <position position="87"/>
    </location>
    <ligand>
        <name>Mg(2+)</name>
        <dbReference type="ChEBI" id="CHEBI:18420"/>
        <label>1</label>
    </ligand>
</feature>
<feature type="binding site" evidence="1">
    <location>
        <position position="87"/>
    </location>
    <ligand>
        <name>Mg(2+)</name>
        <dbReference type="ChEBI" id="CHEBI:18420"/>
        <label>2</label>
    </ligand>
</feature>
<feature type="binding site" evidence="1">
    <location>
        <position position="89"/>
    </location>
    <ligand>
        <name>Mg(2+)</name>
        <dbReference type="ChEBI" id="CHEBI:18420"/>
        <label>1</label>
    </ligand>
</feature>
<feature type="binding site" evidence="1">
    <location>
        <begin position="90"/>
        <end position="93"/>
    </location>
    <ligand>
        <name>substrate</name>
    </ligand>
</feature>
<feature type="binding site" evidence="1">
    <location>
        <position position="90"/>
    </location>
    <ligand>
        <name>Mg(2+)</name>
        <dbReference type="ChEBI" id="CHEBI:18420"/>
        <label>2</label>
    </ligand>
</feature>
<feature type="binding site" evidence="1">
    <location>
        <position position="195"/>
    </location>
    <ligand>
        <name>substrate</name>
    </ligand>
</feature>
<feature type="binding site" evidence="1">
    <location>
        <position position="225"/>
    </location>
    <ligand>
        <name>substrate</name>
    </ligand>
</feature>
<feature type="binding site" evidence="1">
    <location>
        <position position="231"/>
    </location>
    <ligand>
        <name>Mg(2+)</name>
        <dbReference type="ChEBI" id="CHEBI:18420"/>
        <label>2</label>
    </ligand>
</feature>
<protein>
    <recommendedName>
        <fullName evidence="1">Fructose-1,6-bisphosphatase class 1</fullName>
        <shortName evidence="1">FBPase class 1</shortName>
        <ecNumber evidence="1">3.1.3.11</ecNumber>
    </recommendedName>
    <alternativeName>
        <fullName evidence="1">D-fructose-1,6-bisphosphate 1-phosphohydrolase class 1</fullName>
    </alternativeName>
</protein>
<keyword id="KW-0119">Carbohydrate metabolism</keyword>
<keyword id="KW-0963">Cytoplasm</keyword>
<keyword id="KW-0378">Hydrolase</keyword>
<keyword id="KW-0460">Magnesium</keyword>
<keyword id="KW-0479">Metal-binding</keyword>
<keyword id="KW-1185">Reference proteome</keyword>